<dbReference type="EMBL" id="CP000431">
    <property type="protein sequence ID" value="ABG98352.1"/>
    <property type="molecule type" value="Genomic_DNA"/>
</dbReference>
<dbReference type="RefSeq" id="WP_005240533.1">
    <property type="nucleotide sequence ID" value="NC_008268.1"/>
</dbReference>
<dbReference type="SMR" id="Q0S284"/>
<dbReference type="GeneID" id="69890953"/>
<dbReference type="KEGG" id="rha:RHA1_ro06579"/>
<dbReference type="eggNOG" id="COG0264">
    <property type="taxonomic scope" value="Bacteria"/>
</dbReference>
<dbReference type="HOGENOM" id="CLU_047155_0_0_11"/>
<dbReference type="OrthoDB" id="9808348at2"/>
<dbReference type="Proteomes" id="UP000008710">
    <property type="component" value="Chromosome"/>
</dbReference>
<dbReference type="GO" id="GO:0005737">
    <property type="term" value="C:cytoplasm"/>
    <property type="evidence" value="ECO:0007669"/>
    <property type="project" value="UniProtKB-SubCell"/>
</dbReference>
<dbReference type="GO" id="GO:0003746">
    <property type="term" value="F:translation elongation factor activity"/>
    <property type="evidence" value="ECO:0007669"/>
    <property type="project" value="UniProtKB-UniRule"/>
</dbReference>
<dbReference type="CDD" id="cd14275">
    <property type="entry name" value="UBA_EF-Ts"/>
    <property type="match status" value="1"/>
</dbReference>
<dbReference type="FunFam" id="1.10.286.20:FF:000001">
    <property type="entry name" value="Elongation factor Ts"/>
    <property type="match status" value="1"/>
</dbReference>
<dbReference type="FunFam" id="1.10.8.10:FF:000001">
    <property type="entry name" value="Elongation factor Ts"/>
    <property type="match status" value="1"/>
</dbReference>
<dbReference type="Gene3D" id="1.10.286.20">
    <property type="match status" value="1"/>
</dbReference>
<dbReference type="Gene3D" id="1.10.8.10">
    <property type="entry name" value="DNA helicase RuvA subunit, C-terminal domain"/>
    <property type="match status" value="1"/>
</dbReference>
<dbReference type="Gene3D" id="3.30.479.20">
    <property type="entry name" value="Elongation factor Ts, dimerisation domain"/>
    <property type="match status" value="2"/>
</dbReference>
<dbReference type="HAMAP" id="MF_00050">
    <property type="entry name" value="EF_Ts"/>
    <property type="match status" value="1"/>
</dbReference>
<dbReference type="InterPro" id="IPR036402">
    <property type="entry name" value="EF-Ts_dimer_sf"/>
</dbReference>
<dbReference type="InterPro" id="IPR001816">
    <property type="entry name" value="Transl_elong_EFTs/EF1B"/>
</dbReference>
<dbReference type="InterPro" id="IPR014039">
    <property type="entry name" value="Transl_elong_EFTs/EF1B_dimer"/>
</dbReference>
<dbReference type="InterPro" id="IPR018101">
    <property type="entry name" value="Transl_elong_Ts_CS"/>
</dbReference>
<dbReference type="InterPro" id="IPR009060">
    <property type="entry name" value="UBA-like_sf"/>
</dbReference>
<dbReference type="NCBIfam" id="TIGR00116">
    <property type="entry name" value="tsf"/>
    <property type="match status" value="1"/>
</dbReference>
<dbReference type="PANTHER" id="PTHR11741">
    <property type="entry name" value="ELONGATION FACTOR TS"/>
    <property type="match status" value="1"/>
</dbReference>
<dbReference type="PANTHER" id="PTHR11741:SF0">
    <property type="entry name" value="ELONGATION FACTOR TS, MITOCHONDRIAL"/>
    <property type="match status" value="1"/>
</dbReference>
<dbReference type="Pfam" id="PF00889">
    <property type="entry name" value="EF_TS"/>
    <property type="match status" value="1"/>
</dbReference>
<dbReference type="SUPFAM" id="SSF54713">
    <property type="entry name" value="Elongation factor Ts (EF-Ts), dimerisation domain"/>
    <property type="match status" value="2"/>
</dbReference>
<dbReference type="SUPFAM" id="SSF46934">
    <property type="entry name" value="UBA-like"/>
    <property type="match status" value="1"/>
</dbReference>
<dbReference type="PROSITE" id="PS01126">
    <property type="entry name" value="EF_TS_1"/>
    <property type="match status" value="1"/>
</dbReference>
<gene>
    <name evidence="1" type="primary">tsf</name>
    <name type="ordered locus">RHA1_ro06579</name>
</gene>
<keyword id="KW-0963">Cytoplasm</keyword>
<keyword id="KW-0251">Elongation factor</keyword>
<keyword id="KW-0648">Protein biosynthesis</keyword>
<protein>
    <recommendedName>
        <fullName evidence="1">Elongation factor Ts</fullName>
        <shortName evidence="1">EF-Ts</shortName>
    </recommendedName>
</protein>
<reference key="1">
    <citation type="journal article" date="2006" name="Proc. Natl. Acad. Sci. U.S.A.">
        <title>The complete genome of Rhodococcus sp. RHA1 provides insights into a catabolic powerhouse.</title>
        <authorList>
            <person name="McLeod M.P."/>
            <person name="Warren R.L."/>
            <person name="Hsiao W.W.L."/>
            <person name="Araki N."/>
            <person name="Myhre M."/>
            <person name="Fernandes C."/>
            <person name="Miyazawa D."/>
            <person name="Wong W."/>
            <person name="Lillquist A.L."/>
            <person name="Wang D."/>
            <person name="Dosanjh M."/>
            <person name="Hara H."/>
            <person name="Petrescu A."/>
            <person name="Morin R.D."/>
            <person name="Yang G."/>
            <person name="Stott J.M."/>
            <person name="Schein J.E."/>
            <person name="Shin H."/>
            <person name="Smailus D."/>
            <person name="Siddiqui A.S."/>
            <person name="Marra M.A."/>
            <person name="Jones S.J.M."/>
            <person name="Holt R."/>
            <person name="Brinkman F.S.L."/>
            <person name="Miyauchi K."/>
            <person name="Fukuda M."/>
            <person name="Davies J.E."/>
            <person name="Mohn W.W."/>
            <person name="Eltis L.D."/>
        </authorList>
    </citation>
    <scope>NUCLEOTIDE SEQUENCE [LARGE SCALE GENOMIC DNA]</scope>
    <source>
        <strain>RHA1</strain>
    </source>
</reference>
<proteinExistence type="inferred from homology"/>
<organism>
    <name type="scientific">Rhodococcus jostii (strain RHA1)</name>
    <dbReference type="NCBI Taxonomy" id="101510"/>
    <lineage>
        <taxon>Bacteria</taxon>
        <taxon>Bacillati</taxon>
        <taxon>Actinomycetota</taxon>
        <taxon>Actinomycetes</taxon>
        <taxon>Mycobacteriales</taxon>
        <taxon>Nocardiaceae</taxon>
        <taxon>Rhodococcus</taxon>
    </lineage>
</organism>
<feature type="chain" id="PRO_1000006164" description="Elongation factor Ts">
    <location>
        <begin position="1"/>
        <end position="275"/>
    </location>
</feature>
<feature type="region of interest" description="Involved in Mg(2+) ion dislocation from EF-Tu" evidence="1">
    <location>
        <begin position="76"/>
        <end position="79"/>
    </location>
</feature>
<name>EFTS_RHOJR</name>
<sequence>MANYTAADVKRLRELTGSGMMACKNALAEAEGDFDKAVEQLRIKGAKDVGKRAERTTAEGLVVSKDGVLLELDCETDFVAKNEDFLKLAESIVTVAAAAKPADVDALKALDLDGKTVDTVIQEQSAKIGEKLVLSKIASFDGPVAVYLHKRSADLPPAVGVLVEYTGEGDAAAEAARGAAMQVAALKAKYVTRDEVPEDIVANERHIAEETARAEGKPEQALPKIIEGRVNGYFKDVVLTEQSSVQDSKKSVKAILDEAGVTIKRFVRFEVGASS</sequence>
<accession>Q0S284</accession>
<evidence type="ECO:0000255" key="1">
    <source>
        <dbReference type="HAMAP-Rule" id="MF_00050"/>
    </source>
</evidence>
<comment type="function">
    <text evidence="1">Associates with the EF-Tu.GDP complex and induces the exchange of GDP to GTP. It remains bound to the aminoacyl-tRNA.EF-Tu.GTP complex up to the GTP hydrolysis stage on the ribosome.</text>
</comment>
<comment type="subcellular location">
    <subcellularLocation>
        <location evidence="1">Cytoplasm</location>
    </subcellularLocation>
</comment>
<comment type="similarity">
    <text evidence="1">Belongs to the EF-Ts family.</text>
</comment>